<proteinExistence type="evidence at protein level"/>
<comment type="function">
    <text evidence="1 2">Involved in sperm flagellum axonemal organization and function (By similarity). May regulate cilium motility through its role in the assembly of the axonemal radial spokes (By similarity).</text>
</comment>
<comment type="subunit">
    <text evidence="2 5">Part of a complex containing MYCBP, AKAP1 and PRKAR2B. Interacts with MYCBP and AKAP1. Interacts with CFAP61 (PubMed:34792097).</text>
</comment>
<comment type="subcellular location">
    <subcellularLocation>
        <location evidence="2">Cytoplasm</location>
    </subcellularLocation>
    <subcellularLocation>
        <location evidence="2">Mitochondrion</location>
    </subcellularLocation>
    <subcellularLocation>
        <location evidence="1">Cytoplasm</location>
        <location evidence="1">Cytoskeleton</location>
        <location evidence="1">Cilium axoneme</location>
    </subcellularLocation>
</comment>
<comment type="alternative products">
    <event type="alternative splicing"/>
    <isoform>
        <id>Q8BRC6-2</id>
        <name>1</name>
        <sequence type="displayed"/>
    </isoform>
    <isoform>
        <id>Q8BRC6-1</id>
        <name>2</name>
        <sequence type="described" ref="VSP_045751 VSP_045752"/>
    </isoform>
</comment>
<comment type="tissue specificity">
    <text evidence="4">Expressed in the testis, in cells involved in spermatogenesis.</text>
</comment>
<comment type="developmental stage">
    <text evidence="4">Expression begins in 1 week old mice.</text>
</comment>
<comment type="PTM">
    <text evidence="2">Phosphorylated by PKA.</text>
</comment>
<comment type="similarity">
    <text>Belongs to the CFAP91 family.</text>
</comment>
<evidence type="ECO:0000250" key="1">
    <source>
        <dbReference type="UniProtKB" id="A8IH47"/>
    </source>
</evidence>
<evidence type="ECO:0000250" key="2">
    <source>
        <dbReference type="UniProtKB" id="Q7Z4T9"/>
    </source>
</evidence>
<evidence type="ECO:0000256" key="3">
    <source>
        <dbReference type="SAM" id="MobiDB-lite"/>
    </source>
</evidence>
<evidence type="ECO:0000269" key="4">
    <source>
    </source>
</evidence>
<evidence type="ECO:0000269" key="5">
    <source>
    </source>
</evidence>
<evidence type="ECO:0000303" key="6">
    <source>
    </source>
</evidence>
<evidence type="ECO:0000305" key="7"/>
<evidence type="ECO:0000312" key="8">
    <source>
        <dbReference type="MGI" id="MGI:2443598"/>
    </source>
</evidence>
<reference key="1">
    <citation type="journal article" date="2005" name="Science">
        <title>The transcriptional landscape of the mammalian genome.</title>
        <authorList>
            <person name="Carninci P."/>
            <person name="Kasukawa T."/>
            <person name="Katayama S."/>
            <person name="Gough J."/>
            <person name="Frith M.C."/>
            <person name="Maeda N."/>
            <person name="Oyama R."/>
            <person name="Ravasi T."/>
            <person name="Lenhard B."/>
            <person name="Wells C."/>
            <person name="Kodzius R."/>
            <person name="Shimokawa K."/>
            <person name="Bajic V.B."/>
            <person name="Brenner S.E."/>
            <person name="Batalov S."/>
            <person name="Forrest A.R."/>
            <person name="Zavolan M."/>
            <person name="Davis M.J."/>
            <person name="Wilming L.G."/>
            <person name="Aidinis V."/>
            <person name="Allen J.E."/>
            <person name="Ambesi-Impiombato A."/>
            <person name="Apweiler R."/>
            <person name="Aturaliya R.N."/>
            <person name="Bailey T.L."/>
            <person name="Bansal M."/>
            <person name="Baxter L."/>
            <person name="Beisel K.W."/>
            <person name="Bersano T."/>
            <person name="Bono H."/>
            <person name="Chalk A.M."/>
            <person name="Chiu K.P."/>
            <person name="Choudhary V."/>
            <person name="Christoffels A."/>
            <person name="Clutterbuck D.R."/>
            <person name="Crowe M.L."/>
            <person name="Dalla E."/>
            <person name="Dalrymple B.P."/>
            <person name="de Bono B."/>
            <person name="Della Gatta G."/>
            <person name="di Bernardo D."/>
            <person name="Down T."/>
            <person name="Engstrom P."/>
            <person name="Fagiolini M."/>
            <person name="Faulkner G."/>
            <person name="Fletcher C.F."/>
            <person name="Fukushima T."/>
            <person name="Furuno M."/>
            <person name="Futaki S."/>
            <person name="Gariboldi M."/>
            <person name="Georgii-Hemming P."/>
            <person name="Gingeras T.R."/>
            <person name="Gojobori T."/>
            <person name="Green R.E."/>
            <person name="Gustincich S."/>
            <person name="Harbers M."/>
            <person name="Hayashi Y."/>
            <person name="Hensch T.K."/>
            <person name="Hirokawa N."/>
            <person name="Hill D."/>
            <person name="Huminiecki L."/>
            <person name="Iacono M."/>
            <person name="Ikeo K."/>
            <person name="Iwama A."/>
            <person name="Ishikawa T."/>
            <person name="Jakt M."/>
            <person name="Kanapin A."/>
            <person name="Katoh M."/>
            <person name="Kawasawa Y."/>
            <person name="Kelso J."/>
            <person name="Kitamura H."/>
            <person name="Kitano H."/>
            <person name="Kollias G."/>
            <person name="Krishnan S.P."/>
            <person name="Kruger A."/>
            <person name="Kummerfeld S.K."/>
            <person name="Kurochkin I.V."/>
            <person name="Lareau L.F."/>
            <person name="Lazarevic D."/>
            <person name="Lipovich L."/>
            <person name="Liu J."/>
            <person name="Liuni S."/>
            <person name="McWilliam S."/>
            <person name="Madan Babu M."/>
            <person name="Madera M."/>
            <person name="Marchionni L."/>
            <person name="Matsuda H."/>
            <person name="Matsuzawa S."/>
            <person name="Miki H."/>
            <person name="Mignone F."/>
            <person name="Miyake S."/>
            <person name="Morris K."/>
            <person name="Mottagui-Tabar S."/>
            <person name="Mulder N."/>
            <person name="Nakano N."/>
            <person name="Nakauchi H."/>
            <person name="Ng P."/>
            <person name="Nilsson R."/>
            <person name="Nishiguchi S."/>
            <person name="Nishikawa S."/>
            <person name="Nori F."/>
            <person name="Ohara O."/>
            <person name="Okazaki Y."/>
            <person name="Orlando V."/>
            <person name="Pang K.C."/>
            <person name="Pavan W.J."/>
            <person name="Pavesi G."/>
            <person name="Pesole G."/>
            <person name="Petrovsky N."/>
            <person name="Piazza S."/>
            <person name="Reed J."/>
            <person name="Reid J.F."/>
            <person name="Ring B.Z."/>
            <person name="Ringwald M."/>
            <person name="Rost B."/>
            <person name="Ruan Y."/>
            <person name="Salzberg S.L."/>
            <person name="Sandelin A."/>
            <person name="Schneider C."/>
            <person name="Schoenbach C."/>
            <person name="Sekiguchi K."/>
            <person name="Semple C.A."/>
            <person name="Seno S."/>
            <person name="Sessa L."/>
            <person name="Sheng Y."/>
            <person name="Shibata Y."/>
            <person name="Shimada H."/>
            <person name="Shimada K."/>
            <person name="Silva D."/>
            <person name="Sinclair B."/>
            <person name="Sperling S."/>
            <person name="Stupka E."/>
            <person name="Sugiura K."/>
            <person name="Sultana R."/>
            <person name="Takenaka Y."/>
            <person name="Taki K."/>
            <person name="Tammoja K."/>
            <person name="Tan S.L."/>
            <person name="Tang S."/>
            <person name="Taylor M.S."/>
            <person name="Tegner J."/>
            <person name="Teichmann S.A."/>
            <person name="Ueda H.R."/>
            <person name="van Nimwegen E."/>
            <person name="Verardo R."/>
            <person name="Wei C.L."/>
            <person name="Yagi K."/>
            <person name="Yamanishi H."/>
            <person name="Zabarovsky E."/>
            <person name="Zhu S."/>
            <person name="Zimmer A."/>
            <person name="Hide W."/>
            <person name="Bult C."/>
            <person name="Grimmond S.M."/>
            <person name="Teasdale R.D."/>
            <person name="Liu E.T."/>
            <person name="Brusic V."/>
            <person name="Quackenbush J."/>
            <person name="Wahlestedt C."/>
            <person name="Mattick J.S."/>
            <person name="Hume D.A."/>
            <person name="Kai C."/>
            <person name="Sasaki D."/>
            <person name="Tomaru Y."/>
            <person name="Fukuda S."/>
            <person name="Kanamori-Katayama M."/>
            <person name="Suzuki M."/>
            <person name="Aoki J."/>
            <person name="Arakawa T."/>
            <person name="Iida J."/>
            <person name="Imamura K."/>
            <person name="Itoh M."/>
            <person name="Kato T."/>
            <person name="Kawaji H."/>
            <person name="Kawagashira N."/>
            <person name="Kawashima T."/>
            <person name="Kojima M."/>
            <person name="Kondo S."/>
            <person name="Konno H."/>
            <person name="Nakano K."/>
            <person name="Ninomiya N."/>
            <person name="Nishio T."/>
            <person name="Okada M."/>
            <person name="Plessy C."/>
            <person name="Shibata K."/>
            <person name="Shiraki T."/>
            <person name="Suzuki S."/>
            <person name="Tagami M."/>
            <person name="Waki K."/>
            <person name="Watahiki A."/>
            <person name="Okamura-Oho Y."/>
            <person name="Suzuki H."/>
            <person name="Kawai J."/>
            <person name="Hayashizaki Y."/>
        </authorList>
    </citation>
    <scope>NUCLEOTIDE SEQUENCE [LARGE SCALE MRNA] (ISOFORM 2)</scope>
    <source>
        <strain>C57BL/6J</strain>
    </source>
</reference>
<reference key="2">
    <citation type="journal article" date="2009" name="PLoS Biol.">
        <title>Lineage-specific biology revealed by a finished genome assembly of the mouse.</title>
        <authorList>
            <person name="Church D.M."/>
            <person name="Goodstadt L."/>
            <person name="Hillier L.W."/>
            <person name="Zody M.C."/>
            <person name="Goldstein S."/>
            <person name="She X."/>
            <person name="Bult C.J."/>
            <person name="Agarwala R."/>
            <person name="Cherry J.L."/>
            <person name="DiCuccio M."/>
            <person name="Hlavina W."/>
            <person name="Kapustin Y."/>
            <person name="Meric P."/>
            <person name="Maglott D."/>
            <person name="Birtle Z."/>
            <person name="Marques A.C."/>
            <person name="Graves T."/>
            <person name="Zhou S."/>
            <person name="Teague B."/>
            <person name="Potamousis K."/>
            <person name="Churas C."/>
            <person name="Place M."/>
            <person name="Herschleb J."/>
            <person name="Runnheim R."/>
            <person name="Forrest D."/>
            <person name="Amos-Landgraf J."/>
            <person name="Schwartz D.C."/>
            <person name="Cheng Z."/>
            <person name="Lindblad-Toh K."/>
            <person name="Eichler E.E."/>
            <person name="Ponting C.P."/>
        </authorList>
    </citation>
    <scope>NUCLEOTIDE SEQUENCE [LARGE SCALE GENOMIC DNA]</scope>
    <source>
        <strain>C57BL/6J</strain>
    </source>
</reference>
<reference key="3">
    <citation type="journal article" date="2002" name="J. Biol. Chem.">
        <title>AAT-1, a novel testis-specific AMY-1-binding protein, forms a quaternary complex between AMY-1, A-kinase anchor protein 84 and a regulatory subunit of cAMP-dependent protein kinase and is phosphorylated by its kinase.</title>
        <authorList>
            <person name="Yukitake H."/>
            <person name="Furusawa M."/>
            <person name="Taira T."/>
            <person name="Iguchi-Ariga S.M.M."/>
            <person name="Ariga H."/>
        </authorList>
    </citation>
    <scope>TISSUE SPECIFICITY</scope>
    <scope>DEVELOPMENTAL STAGE</scope>
</reference>
<reference key="4">
    <citation type="journal article" date="2010" name="Cell">
        <title>A tissue-specific atlas of mouse protein phosphorylation and expression.</title>
        <authorList>
            <person name="Huttlin E.L."/>
            <person name="Jedrychowski M.P."/>
            <person name="Elias J.E."/>
            <person name="Goswami T."/>
            <person name="Rad R."/>
            <person name="Beausoleil S.A."/>
            <person name="Villen J."/>
            <person name="Haas W."/>
            <person name="Sowa M.E."/>
            <person name="Gygi S.P."/>
        </authorList>
    </citation>
    <scope>IDENTIFICATION BY MASS SPECTROMETRY [LARGE SCALE ANALYSIS]</scope>
    <source>
        <tissue>Testis</tissue>
    </source>
</reference>
<reference key="5">
    <citation type="journal article" date="2021" name="Development">
        <title>CFAP61 is required for sperm flagellum formation and male fertility in human and mouse.</title>
        <authorList>
            <person name="Liu S."/>
            <person name="Zhang J."/>
            <person name="Kherraf Z.E."/>
            <person name="Sun S."/>
            <person name="Zhang X."/>
            <person name="Cazin C."/>
            <person name="Coutton C."/>
            <person name="Zouari R."/>
            <person name="Zhao S."/>
            <person name="Hu F."/>
            <person name="Fourati Ben Mustapha S."/>
            <person name="Arnoult C."/>
            <person name="Ray P.F."/>
            <person name="Liu M."/>
        </authorList>
    </citation>
    <scope>INTERACTION WITH CFAP61</scope>
</reference>
<protein>
    <recommendedName>
        <fullName evidence="2">Cilia- and flagella-associated protein 91</fullName>
        <shortName evidence="7">CFAP91</shortName>
    </recommendedName>
    <alternativeName>
        <fullName>AMY-1-associating protein expressed in testis 1 homolog</fullName>
        <shortName>AAT-1</shortName>
    </alternativeName>
    <alternativeName>
        <fullName>MYCBP/AMY-1-associated testis-expressed protein 1</fullName>
    </alternativeName>
    <alternativeName>
        <fullName evidence="7">Protein MAATS1</fullName>
    </alternativeName>
</protein>
<accession>Q8BRC6</accession>
<accession>E9PZ32</accession>
<accession>E9QND1</accession>
<keyword id="KW-0025">Alternative splicing</keyword>
<keyword id="KW-0966">Cell projection</keyword>
<keyword id="KW-0963">Cytoplasm</keyword>
<keyword id="KW-0206">Cytoskeleton</keyword>
<keyword id="KW-0221">Differentiation</keyword>
<keyword id="KW-0496">Mitochondrion</keyword>
<keyword id="KW-1185">Reference proteome</keyword>
<keyword id="KW-0744">Spermatogenesis</keyword>
<dbReference type="EMBL" id="AK045121">
    <property type="protein sequence ID" value="BAC32231.1"/>
    <property type="molecule type" value="mRNA"/>
</dbReference>
<dbReference type="EMBL" id="AC154809">
    <property type="status" value="NOT_ANNOTATED_CDS"/>
    <property type="molecule type" value="Genomic_DNA"/>
</dbReference>
<dbReference type="CCDS" id="CCDS37341.1">
    <molecule id="Q8BRC6-2"/>
</dbReference>
<dbReference type="RefSeq" id="NP_001074494.1">
    <molecule id="Q8BRC6-2"/>
    <property type="nucleotide sequence ID" value="NM_001081025.1"/>
</dbReference>
<dbReference type="SMR" id="Q8BRC6"/>
<dbReference type="BioGRID" id="235850">
    <property type="interactions" value="4"/>
</dbReference>
<dbReference type="FunCoup" id="Q8BRC6">
    <property type="interactions" value="34"/>
</dbReference>
<dbReference type="STRING" id="10090.ENSMUSP00000023501"/>
<dbReference type="GlyGen" id="Q8BRC6">
    <property type="glycosylation" value="1 site"/>
</dbReference>
<dbReference type="iPTMnet" id="Q8BRC6"/>
<dbReference type="PhosphoSitePlus" id="Q8BRC6"/>
<dbReference type="PaxDb" id="10090-ENSMUSP00000023501"/>
<dbReference type="ProteomicsDB" id="280087">
    <molecule id="Q8BRC6-2"/>
</dbReference>
<dbReference type="ProteomicsDB" id="281112">
    <molecule id="Q8BRC6-1"/>
</dbReference>
<dbReference type="Ensembl" id="ENSMUST00000023501.16">
    <molecule id="Q8BRC6-2"/>
    <property type="protein sequence ID" value="ENSMUSP00000023501.9"/>
    <property type="gene ID" value="ENSMUSG00000022805.18"/>
</dbReference>
<dbReference type="Ensembl" id="ENSMUST00000114740.3">
    <molecule id="Q8BRC6-1"/>
    <property type="protein sequence ID" value="ENSMUSP00000110388.3"/>
    <property type="gene ID" value="ENSMUSG00000022805.18"/>
</dbReference>
<dbReference type="GeneID" id="320214"/>
<dbReference type="KEGG" id="mmu:320214"/>
<dbReference type="UCSC" id="uc007zer.1">
    <molecule id="Q8BRC6-2"/>
    <property type="organism name" value="mouse"/>
</dbReference>
<dbReference type="UCSC" id="uc007zes.1">
    <molecule id="Q8BRC6-1"/>
    <property type="organism name" value="mouse"/>
</dbReference>
<dbReference type="AGR" id="MGI:2443598"/>
<dbReference type="CTD" id="89876"/>
<dbReference type="MGI" id="MGI:2443598">
    <property type="gene designation" value="Cfap91"/>
</dbReference>
<dbReference type="VEuPathDB" id="HostDB:ENSMUSG00000022805"/>
<dbReference type="eggNOG" id="ENOG502QRFI">
    <property type="taxonomic scope" value="Eukaryota"/>
</dbReference>
<dbReference type="GeneTree" id="ENSGT00390000003024"/>
<dbReference type="HOGENOM" id="CLU_011633_0_0_1"/>
<dbReference type="InParanoid" id="Q8BRC6"/>
<dbReference type="OMA" id="VQTMYRD"/>
<dbReference type="OrthoDB" id="567787at2759"/>
<dbReference type="PhylomeDB" id="Q8BRC6"/>
<dbReference type="TreeFam" id="TF328648"/>
<dbReference type="BioGRID-ORCS" id="320214">
    <property type="hits" value="1 hit in 77 CRISPR screens"/>
</dbReference>
<dbReference type="PRO" id="PR:Q8BRC6"/>
<dbReference type="Proteomes" id="UP000000589">
    <property type="component" value="Chromosome 16"/>
</dbReference>
<dbReference type="RNAct" id="Q8BRC6">
    <property type="molecule type" value="protein"/>
</dbReference>
<dbReference type="Bgee" id="ENSMUSG00000022805">
    <property type="expression patterns" value="Expressed in ventricular system choroidal fissure and 66 other cell types or tissues"/>
</dbReference>
<dbReference type="GO" id="GO:0005930">
    <property type="term" value="C:axoneme"/>
    <property type="evidence" value="ECO:0000250"/>
    <property type="project" value="UniProtKB"/>
</dbReference>
<dbReference type="GO" id="GO:0005739">
    <property type="term" value="C:mitochondrion"/>
    <property type="evidence" value="ECO:0007669"/>
    <property type="project" value="UniProtKB-SubCell"/>
</dbReference>
<dbReference type="GO" id="GO:0031514">
    <property type="term" value="C:motile cilium"/>
    <property type="evidence" value="ECO:0000250"/>
    <property type="project" value="UniProtKB"/>
</dbReference>
<dbReference type="GO" id="GO:1904158">
    <property type="term" value="P:axonemal central apparatus assembly"/>
    <property type="evidence" value="ECO:0000250"/>
    <property type="project" value="UniProtKB"/>
</dbReference>
<dbReference type="GO" id="GO:0030154">
    <property type="term" value="P:cell differentiation"/>
    <property type="evidence" value="ECO:0007669"/>
    <property type="project" value="UniProtKB-KW"/>
</dbReference>
<dbReference type="GO" id="GO:0003341">
    <property type="term" value="P:cilium movement"/>
    <property type="evidence" value="ECO:0000250"/>
    <property type="project" value="UniProtKB"/>
</dbReference>
<dbReference type="GO" id="GO:0007283">
    <property type="term" value="P:spermatogenesis"/>
    <property type="evidence" value="ECO:0000250"/>
    <property type="project" value="UniProtKB"/>
</dbReference>
<dbReference type="InterPro" id="IPR026720">
    <property type="entry name" value="CFAP91"/>
</dbReference>
<dbReference type="InterPro" id="IPR032840">
    <property type="entry name" value="CFAP91_dom"/>
</dbReference>
<dbReference type="PANTHER" id="PTHR22455">
    <property type="entry name" value="CILIA- AND FLAGELLA-ASSOCIATED PROTEIN 91"/>
    <property type="match status" value="1"/>
</dbReference>
<dbReference type="PANTHER" id="PTHR22455:SF10">
    <property type="entry name" value="CILIA- AND FLAGELLA-ASSOCIATED PROTEIN 91"/>
    <property type="match status" value="1"/>
</dbReference>
<dbReference type="Pfam" id="PF14738">
    <property type="entry name" value="CFAP91"/>
    <property type="match status" value="1"/>
</dbReference>
<feature type="chain" id="PRO_0000064419" description="Cilia- and flagella-associated protein 91">
    <location>
        <begin position="1"/>
        <end position="783"/>
    </location>
</feature>
<feature type="region of interest" description="Disordered" evidence="3">
    <location>
        <begin position="748"/>
        <end position="783"/>
    </location>
</feature>
<feature type="compositionally biased region" description="Acidic residues" evidence="3">
    <location>
        <begin position="748"/>
        <end position="760"/>
    </location>
</feature>
<feature type="compositionally biased region" description="Polar residues" evidence="3">
    <location>
        <begin position="764"/>
        <end position="776"/>
    </location>
</feature>
<feature type="splice variant" id="VSP_045751" description="In isoform 2." evidence="6">
    <original>DIRKLMG</original>
    <variation>EAEEMAQ</variation>
    <location>
        <begin position="339"/>
        <end position="345"/>
    </location>
</feature>
<feature type="splice variant" id="VSP_045752" description="In isoform 2." evidence="6">
    <location>
        <begin position="346"/>
        <end position="783"/>
    </location>
</feature>
<feature type="sequence conflict" description="In Ref. 1; BAC32231." evidence="7" ref="1">
    <original>E</original>
    <variation>K</variation>
    <location>
        <position position="238"/>
    </location>
</feature>
<sequence length="783" mass="91623">MSQTVTIQEPRPNDQRIPYQCREVRRAKGGFANRTYDYLYDPLFIVSSERDHAQANIQATLIRSRLKKVPNFRSMFSNLFHHPRYSMYWSKTDPVPLHVTREWRGQEAKHKEVLRLQAAMDTSFQMPKEKDEDPDVSGKNRYKFFDRPFLPFLQQMPLNVVLSPVKTQPLLLTPESSKYAIIPTKSTVATQTDYRDADVQTDPYSPEYVVCQDTIPELLTLANLTWGRGLPAGQAEVEIIERAREKRAWEATLPPLNDSVQAEKRRKMMNAMERKEWAFREGEIEKLQELRLEVLKQLLKRREEDQNELNMRHLNDQWYKLQEAKEAKVAQIRHKHVSDIRKLMGKGKNIEGKLQRRDIISDYSNFASQVYGPLSRLGRFPDNNSEDFVVRNHYLNTYEGLVELESSLPDFVTQPRIKPPKPQIITTKAGFLKRTARMDYELAEVHKALVDKKNKGLEGTKSLRFLQKNPISQARLPTPSLEMTSYEEGEIEMAVIYLQKLLRGRVVQNMMFEGKEKRLELILELRTSHALQEDDKLVKKAEKQVTLALQRQRNLHEDKLSVIENHLGDLEGRVLADMFDFLSKELVRLQEERRIHAFAMLAERQRRMREAEESGRRQVEQKRLQQEDMIFKEVIKVHQSTVTSYLEDIILNTEERTAEEQARKEIEKIAEEINNIAYEMENRRTYLQSEEIVAELVYSFLIPEVQKDFVKEKVRNAQRKHILAAHEIIHSNTETMLEEQVYKELQSEDFELEEEAESLDSEVPTVSVSKTSTIKPTQDEGEG</sequence>
<organism>
    <name type="scientific">Mus musculus</name>
    <name type="common">Mouse</name>
    <dbReference type="NCBI Taxonomy" id="10090"/>
    <lineage>
        <taxon>Eukaryota</taxon>
        <taxon>Metazoa</taxon>
        <taxon>Chordata</taxon>
        <taxon>Craniata</taxon>
        <taxon>Vertebrata</taxon>
        <taxon>Euteleostomi</taxon>
        <taxon>Mammalia</taxon>
        <taxon>Eutheria</taxon>
        <taxon>Euarchontoglires</taxon>
        <taxon>Glires</taxon>
        <taxon>Rodentia</taxon>
        <taxon>Myomorpha</taxon>
        <taxon>Muroidea</taxon>
        <taxon>Muridae</taxon>
        <taxon>Murinae</taxon>
        <taxon>Mus</taxon>
        <taxon>Mus</taxon>
    </lineage>
</organism>
<gene>
    <name evidence="8" type="primary">Cfap91</name>
    <name type="synonym">Aat1</name>
    <name type="synonym">Maats1</name>
    <name type="synonym">Spata26</name>
</gene>
<name>CFA91_MOUSE</name>